<proteinExistence type="evidence at protein level"/>
<gene>
    <name evidence="5" type="primary">Pigs</name>
</gene>
<feature type="initiator methionine" description="Removed" evidence="1">
    <location>
        <position position="1"/>
    </location>
</feature>
<feature type="chain" id="PRO_0000218605" description="GPI-anchor transamidase component PIGS">
    <location>
        <begin position="2"/>
        <end position="555"/>
    </location>
</feature>
<feature type="topological domain" description="Cytoplasmic" evidence="4">
    <location>
        <begin position="2"/>
        <end position="18"/>
    </location>
</feature>
<feature type="transmembrane region" description="Helical" evidence="1">
    <location>
        <begin position="19"/>
        <end position="39"/>
    </location>
</feature>
<feature type="topological domain" description="Lumenal" evidence="4">
    <location>
        <begin position="40"/>
        <end position="517"/>
    </location>
</feature>
<feature type="transmembrane region" description="Helical" evidence="1">
    <location>
        <begin position="518"/>
        <end position="532"/>
    </location>
</feature>
<feature type="topological domain" description="Cytoplasmic" evidence="4">
    <location>
        <begin position="533"/>
        <end position="555"/>
    </location>
</feature>
<feature type="binding site" evidence="1">
    <location>
        <position position="15"/>
    </location>
    <ligand>
        <name>a cardiolipin</name>
        <dbReference type="ChEBI" id="CHEBI:62237"/>
    </ligand>
</feature>
<feature type="binding site" evidence="1">
    <location>
        <position position="18"/>
    </location>
    <ligand>
        <name>a cardiolipin</name>
        <dbReference type="ChEBI" id="CHEBI:62237"/>
    </ligand>
</feature>
<feature type="glycosylation site" description="N-linked (GlcNAc...) asparagine" evidence="2">
    <location>
        <position position="267"/>
    </location>
</feature>
<feature type="glycosylation site" description="N-linked (GlcNAc...) asparagine" evidence="3">
    <location>
        <position position="370"/>
    </location>
</feature>
<reference key="1">
    <citation type="journal article" date="2009" name="PLoS Biol.">
        <title>Lineage-specific biology revealed by a finished genome assembly of the mouse.</title>
        <authorList>
            <person name="Church D.M."/>
            <person name="Goodstadt L."/>
            <person name="Hillier L.W."/>
            <person name="Zody M.C."/>
            <person name="Goldstein S."/>
            <person name="She X."/>
            <person name="Bult C.J."/>
            <person name="Agarwala R."/>
            <person name="Cherry J.L."/>
            <person name="DiCuccio M."/>
            <person name="Hlavina W."/>
            <person name="Kapustin Y."/>
            <person name="Meric P."/>
            <person name="Maglott D."/>
            <person name="Birtle Z."/>
            <person name="Marques A.C."/>
            <person name="Graves T."/>
            <person name="Zhou S."/>
            <person name="Teague B."/>
            <person name="Potamousis K."/>
            <person name="Churas C."/>
            <person name="Place M."/>
            <person name="Herschleb J."/>
            <person name="Runnheim R."/>
            <person name="Forrest D."/>
            <person name="Amos-Landgraf J."/>
            <person name="Schwartz D.C."/>
            <person name="Cheng Z."/>
            <person name="Lindblad-Toh K."/>
            <person name="Eichler E.E."/>
            <person name="Ponting C.P."/>
        </authorList>
    </citation>
    <scope>NUCLEOTIDE SEQUENCE [LARGE SCALE GENOMIC DNA]</scope>
    <source>
        <strain>C57BL/6J</strain>
    </source>
</reference>
<reference key="2">
    <citation type="journal article" date="2004" name="Genome Res.">
        <title>The status, quality, and expansion of the NIH full-length cDNA project: the Mammalian Gene Collection (MGC).</title>
        <authorList>
            <consortium name="The MGC Project Team"/>
        </authorList>
    </citation>
    <scope>NUCLEOTIDE SEQUENCE [LARGE SCALE MRNA]</scope>
    <source>
        <strain>C57BL/6J</strain>
        <tissue>Brain</tissue>
    </source>
</reference>
<reference key="3">
    <citation type="journal article" date="2009" name="Nat. Biotechnol.">
        <title>Mass-spectrometric identification and relative quantification of N-linked cell surface glycoproteins.</title>
        <authorList>
            <person name="Wollscheid B."/>
            <person name="Bausch-Fluck D."/>
            <person name="Henderson C."/>
            <person name="O'Brien R."/>
            <person name="Bibel M."/>
            <person name="Schiess R."/>
            <person name="Aebersold R."/>
            <person name="Watts J.D."/>
        </authorList>
    </citation>
    <scope>GLYCOSYLATION [LARGE SCALE ANALYSIS] AT ASN-370</scope>
</reference>
<reference key="4">
    <citation type="journal article" date="2010" name="Cell">
        <title>A tissue-specific atlas of mouse protein phosphorylation and expression.</title>
        <authorList>
            <person name="Huttlin E.L."/>
            <person name="Jedrychowski M.P."/>
            <person name="Elias J.E."/>
            <person name="Goswami T."/>
            <person name="Rad R."/>
            <person name="Beausoleil S.A."/>
            <person name="Villen J."/>
            <person name="Haas W."/>
            <person name="Sowa M.E."/>
            <person name="Gygi S.P."/>
        </authorList>
    </citation>
    <scope>IDENTIFICATION BY MASS SPECTROMETRY [LARGE SCALE ANALYSIS]</scope>
    <source>
        <tissue>Brain</tissue>
        <tissue>Brown adipose tissue</tissue>
        <tissue>Heart</tissue>
        <tissue>Kidney</tissue>
        <tissue>Liver</tissue>
        <tissue>Lung</tissue>
        <tissue>Pancreas</tissue>
        <tissue>Spleen</tissue>
        <tissue>Testis</tissue>
    </source>
</reference>
<accession>Q6PD26</accession>
<sequence length="555" mass="61711">MAAAGAAATDLEVVRGKRSALFFAAVAILLGLPLWWKTTETYRAPLPYSDISGLNALLLRLMVPVTVVFTRDSVPLDDQEKLPFTVVHEREIPLKYKMKIKCRFQKAYRRALEHEEEALSLGSVHEAEAMLAEPEKQAEGSLTVYVISEHSSLLPQDMMSYIGPERTAVVRGLIHREAFNIIGRRIVQVAQAMSLTEDVLAAALADHLPEDKWSSDKRRPLKSSLGYEITFSLLNPDPKSHDVHWDIEGAVQRFVQPFLNRLSVAGNFSVDSQILYYAMLGVNPRFDPASSSYSLAMHSLPHVINPVESRLGSSAASLYPVLHFLLYVPELAHSPLYIQDKDGAPVATNAFHSPRWGGIMVYNVDPKIYNASELPVRVEVDMVRVMEVFLAQLRLLFGIAQPQVPPKCLLSGPKSEGLMTWELDRLLWARSVENLATATTTLTSLAQLLGKISNIVIKDDVASEVYRAVAAVQKAAKALALGHLSSAFAASQEAVTSSERAFFDPSLLHLLYFPDDQKFAIYIPLFLPMAVPILLSLVKIFQETRKSWKKPEKID</sequence>
<keyword id="KW-0256">Endoplasmic reticulum</keyword>
<keyword id="KW-0325">Glycoprotein</keyword>
<keyword id="KW-0337">GPI-anchor biosynthesis</keyword>
<keyword id="KW-0472">Membrane</keyword>
<keyword id="KW-1185">Reference proteome</keyword>
<keyword id="KW-0812">Transmembrane</keyword>
<keyword id="KW-1133">Transmembrane helix</keyword>
<organism>
    <name type="scientific">Mus musculus</name>
    <name type="common">Mouse</name>
    <dbReference type="NCBI Taxonomy" id="10090"/>
    <lineage>
        <taxon>Eukaryota</taxon>
        <taxon>Metazoa</taxon>
        <taxon>Chordata</taxon>
        <taxon>Craniata</taxon>
        <taxon>Vertebrata</taxon>
        <taxon>Euteleostomi</taxon>
        <taxon>Mammalia</taxon>
        <taxon>Eutheria</taxon>
        <taxon>Euarchontoglires</taxon>
        <taxon>Glires</taxon>
        <taxon>Rodentia</taxon>
        <taxon>Myomorpha</taxon>
        <taxon>Muroidea</taxon>
        <taxon>Muridae</taxon>
        <taxon>Murinae</taxon>
        <taxon>Mus</taxon>
        <taxon>Mus</taxon>
    </lineage>
</organism>
<dbReference type="EMBL" id="AL591070">
    <property type="status" value="NOT_ANNOTATED_CDS"/>
    <property type="molecule type" value="Genomic_DNA"/>
</dbReference>
<dbReference type="EMBL" id="BC058979">
    <property type="protein sequence ID" value="AAH58979.1"/>
    <property type="molecule type" value="mRNA"/>
</dbReference>
<dbReference type="CCDS" id="CCDS25100.1"/>
<dbReference type="RefSeq" id="NP_958808.1">
    <property type="nucleotide sequence ID" value="NM_201406.2"/>
</dbReference>
<dbReference type="SMR" id="Q6PD26"/>
<dbReference type="BioGRID" id="234902">
    <property type="interactions" value="2"/>
</dbReference>
<dbReference type="FunCoup" id="Q6PD26">
    <property type="interactions" value="1507"/>
</dbReference>
<dbReference type="IntAct" id="Q6PD26">
    <property type="interactions" value="1"/>
</dbReference>
<dbReference type="STRING" id="10090.ENSMUSP00000044871"/>
<dbReference type="GlyConnect" id="2360">
    <property type="glycosylation" value="5 N-Linked glycans (1 site)"/>
</dbReference>
<dbReference type="GlyCosmos" id="Q6PD26">
    <property type="glycosylation" value="2 sites, 5 glycans"/>
</dbReference>
<dbReference type="GlyGen" id="Q6PD26">
    <property type="glycosylation" value="2 sites, 6 N-linked glycans (1 site)"/>
</dbReference>
<dbReference type="iPTMnet" id="Q6PD26"/>
<dbReference type="PhosphoSitePlus" id="Q6PD26"/>
<dbReference type="SwissPalm" id="Q6PD26"/>
<dbReference type="jPOST" id="Q6PD26"/>
<dbReference type="PaxDb" id="10090-ENSMUSP00000044871"/>
<dbReference type="ProteomicsDB" id="288211"/>
<dbReference type="Pumba" id="Q6PD26"/>
<dbReference type="Antibodypedia" id="2984">
    <property type="antibodies" value="115 antibodies from 23 providers"/>
</dbReference>
<dbReference type="Ensembl" id="ENSMUST00000048073.9">
    <property type="protein sequence ID" value="ENSMUSP00000044871.9"/>
    <property type="gene ID" value="ENSMUSG00000041958.11"/>
</dbReference>
<dbReference type="GeneID" id="276846"/>
<dbReference type="KEGG" id="mmu:276846"/>
<dbReference type="UCSC" id="uc007kiz.1">
    <property type="organism name" value="mouse"/>
</dbReference>
<dbReference type="AGR" id="MGI:2687325"/>
<dbReference type="CTD" id="94005"/>
<dbReference type="MGI" id="MGI:2687325">
    <property type="gene designation" value="Pigs"/>
</dbReference>
<dbReference type="VEuPathDB" id="HostDB:ENSMUSG00000041958"/>
<dbReference type="eggNOG" id="KOG2459">
    <property type="taxonomic scope" value="Eukaryota"/>
</dbReference>
<dbReference type="GeneTree" id="ENSGT00390000017203"/>
<dbReference type="HOGENOM" id="CLU_010026_3_0_1"/>
<dbReference type="InParanoid" id="Q6PD26"/>
<dbReference type="OMA" id="AEHKYAV"/>
<dbReference type="OrthoDB" id="28748at2759"/>
<dbReference type="PhylomeDB" id="Q6PD26"/>
<dbReference type="TreeFam" id="TF105857"/>
<dbReference type="Reactome" id="R-MMU-162791">
    <property type="pathway name" value="Attachment of GPI anchor to uPAR"/>
</dbReference>
<dbReference type="UniPathway" id="UPA00196"/>
<dbReference type="BioGRID-ORCS" id="276846">
    <property type="hits" value="16 hits in 80 CRISPR screens"/>
</dbReference>
<dbReference type="ChiTaRS" id="Pigs">
    <property type="organism name" value="mouse"/>
</dbReference>
<dbReference type="PRO" id="PR:Q6PD26"/>
<dbReference type="Proteomes" id="UP000000589">
    <property type="component" value="Chromosome 11"/>
</dbReference>
<dbReference type="RNAct" id="Q6PD26">
    <property type="molecule type" value="protein"/>
</dbReference>
<dbReference type="Bgee" id="ENSMUSG00000041958">
    <property type="expression patterns" value="Expressed in choroid plexus of fourth ventricle and 255 other cell types or tissues"/>
</dbReference>
<dbReference type="ExpressionAtlas" id="Q6PD26">
    <property type="expression patterns" value="baseline and differential"/>
</dbReference>
<dbReference type="GO" id="GO:0042765">
    <property type="term" value="C:GPI-anchor transamidase complex"/>
    <property type="evidence" value="ECO:0000314"/>
    <property type="project" value="UniProtKB"/>
</dbReference>
<dbReference type="GO" id="GO:0016255">
    <property type="term" value="P:attachment of GPI anchor to protein"/>
    <property type="evidence" value="ECO:0000315"/>
    <property type="project" value="UniProtKB"/>
</dbReference>
<dbReference type="GO" id="GO:0006506">
    <property type="term" value="P:GPI anchor biosynthetic process"/>
    <property type="evidence" value="ECO:0007669"/>
    <property type="project" value="UniProtKB-UniPathway"/>
</dbReference>
<dbReference type="InterPro" id="IPR019540">
    <property type="entry name" value="PtdIno-glycan_biosynth_class_S"/>
</dbReference>
<dbReference type="PANTHER" id="PTHR21072">
    <property type="entry name" value="GPI TRANSAMIDASE COMPONENT PIG-S"/>
    <property type="match status" value="1"/>
</dbReference>
<dbReference type="PANTHER" id="PTHR21072:SF13">
    <property type="entry name" value="GPI TRANSAMIDASE COMPONENT PIG-S"/>
    <property type="match status" value="1"/>
</dbReference>
<dbReference type="Pfam" id="PF10510">
    <property type="entry name" value="PIG-S"/>
    <property type="match status" value="1"/>
</dbReference>
<name>PIGS_MOUSE</name>
<comment type="function">
    <text evidence="1">Component of the glycosylphosphatidylinositol-anchor (GPI-anchor) transamidase (GPI-T) complex that catalyzes the formation of the linkage between a proprotein and a GPI-anchor and participates in GPI anchored protein biosynthesis.</text>
</comment>
<comment type="pathway">
    <text evidence="1">Glycolipid biosynthesis; glycosylphosphatidylinositol-anchor biosynthesis.</text>
</comment>
<comment type="subunit">
    <text evidence="1">Heteropentamer. Part of the GPI-anchor transamidase complex, consisting of PIGK, PIGT, PIGS, PIGU and GAA1.</text>
</comment>
<comment type="subcellular location">
    <subcellularLocation>
        <location evidence="1">Endoplasmic reticulum membrane</location>
        <topology evidence="1">Multi-pass membrane protein</topology>
    </subcellularLocation>
</comment>
<comment type="similarity">
    <text evidence="4">Belongs to the PIGS family.</text>
</comment>
<protein>
    <recommendedName>
        <fullName evidence="4">GPI-anchor transamidase component PIGS</fullName>
    </recommendedName>
    <alternativeName>
        <fullName>Phosphatidylinositol-glycan biosynthesis class S protein</fullName>
    </alternativeName>
</protein>
<evidence type="ECO:0000250" key="1">
    <source>
        <dbReference type="UniProtKB" id="Q96S52"/>
    </source>
</evidence>
<evidence type="ECO:0000255" key="2"/>
<evidence type="ECO:0000269" key="3">
    <source>
    </source>
</evidence>
<evidence type="ECO:0000305" key="4"/>
<evidence type="ECO:0000312" key="5">
    <source>
        <dbReference type="MGI" id="MGI:2687325"/>
    </source>
</evidence>